<protein>
    <recommendedName>
        <fullName evidence="1">Recombination protein RecR</fullName>
    </recommendedName>
</protein>
<feature type="chain" id="PRO_0000190332" description="Recombination protein RecR">
    <location>
        <begin position="1"/>
        <end position="201"/>
    </location>
</feature>
<feature type="domain" description="Toprim" evidence="1">
    <location>
        <begin position="81"/>
        <end position="176"/>
    </location>
</feature>
<feature type="zinc finger region" description="C4-type" evidence="1">
    <location>
        <begin position="57"/>
        <end position="72"/>
    </location>
</feature>
<organism>
    <name type="scientific">Idiomarina loihiensis (strain ATCC BAA-735 / DSM 15497 / L2-TR)</name>
    <dbReference type="NCBI Taxonomy" id="283942"/>
    <lineage>
        <taxon>Bacteria</taxon>
        <taxon>Pseudomonadati</taxon>
        <taxon>Pseudomonadota</taxon>
        <taxon>Gammaproteobacteria</taxon>
        <taxon>Alteromonadales</taxon>
        <taxon>Idiomarinaceae</taxon>
        <taxon>Idiomarina</taxon>
    </lineage>
</organism>
<sequence>MSISPAIDQLVENLKRLPGVGQKSAQRMAFHLLERDRGGASRLAESLQSAVEKVGHCECCRTLTEEPLCRICSNPMRRENGVLCIVETPADVLAIEQTSQFQGRYFVLMGHLSPLDGIGPADIGLDELERQLQSEPVEEIVLATNPTVEGDATAHYIADIAAQLNINTTRIAHGVPVGGELGYVDQTTLGHAFSGRKQFSR</sequence>
<dbReference type="EMBL" id="AE017340">
    <property type="protein sequence ID" value="AAV82679.1"/>
    <property type="molecule type" value="Genomic_DNA"/>
</dbReference>
<dbReference type="RefSeq" id="WP_011235079.1">
    <property type="nucleotide sequence ID" value="NC_006512.1"/>
</dbReference>
<dbReference type="SMR" id="Q5QWR1"/>
<dbReference type="STRING" id="283942.IL1847"/>
<dbReference type="GeneID" id="41337031"/>
<dbReference type="KEGG" id="ilo:IL1847"/>
<dbReference type="eggNOG" id="COG0353">
    <property type="taxonomic scope" value="Bacteria"/>
</dbReference>
<dbReference type="HOGENOM" id="CLU_060739_1_2_6"/>
<dbReference type="OrthoDB" id="9802672at2"/>
<dbReference type="Proteomes" id="UP000001171">
    <property type="component" value="Chromosome"/>
</dbReference>
<dbReference type="GO" id="GO:0003677">
    <property type="term" value="F:DNA binding"/>
    <property type="evidence" value="ECO:0007669"/>
    <property type="project" value="UniProtKB-UniRule"/>
</dbReference>
<dbReference type="GO" id="GO:0008270">
    <property type="term" value="F:zinc ion binding"/>
    <property type="evidence" value="ECO:0007669"/>
    <property type="project" value="UniProtKB-KW"/>
</dbReference>
<dbReference type="GO" id="GO:0006310">
    <property type="term" value="P:DNA recombination"/>
    <property type="evidence" value="ECO:0007669"/>
    <property type="project" value="UniProtKB-UniRule"/>
</dbReference>
<dbReference type="GO" id="GO:0006281">
    <property type="term" value="P:DNA repair"/>
    <property type="evidence" value="ECO:0007669"/>
    <property type="project" value="UniProtKB-UniRule"/>
</dbReference>
<dbReference type="CDD" id="cd01025">
    <property type="entry name" value="TOPRIM_recR"/>
    <property type="match status" value="1"/>
</dbReference>
<dbReference type="FunFam" id="3.40.1360.10:FF:000001">
    <property type="entry name" value="Recombination protein RecR"/>
    <property type="match status" value="1"/>
</dbReference>
<dbReference type="Gene3D" id="3.40.1360.10">
    <property type="match status" value="1"/>
</dbReference>
<dbReference type="Gene3D" id="6.10.250.240">
    <property type="match status" value="1"/>
</dbReference>
<dbReference type="Gene3D" id="1.10.8.420">
    <property type="entry name" value="RecR Domain 1"/>
    <property type="match status" value="1"/>
</dbReference>
<dbReference type="HAMAP" id="MF_00017">
    <property type="entry name" value="RecR"/>
    <property type="match status" value="1"/>
</dbReference>
<dbReference type="InterPro" id="IPR000093">
    <property type="entry name" value="DNA_Rcmb_RecR"/>
</dbReference>
<dbReference type="InterPro" id="IPR023627">
    <property type="entry name" value="Rcmb_RecR"/>
</dbReference>
<dbReference type="InterPro" id="IPR015967">
    <property type="entry name" value="Rcmb_RecR_Znf"/>
</dbReference>
<dbReference type="InterPro" id="IPR006171">
    <property type="entry name" value="TOPRIM_dom"/>
</dbReference>
<dbReference type="InterPro" id="IPR034137">
    <property type="entry name" value="TOPRIM_RecR"/>
</dbReference>
<dbReference type="NCBIfam" id="TIGR00615">
    <property type="entry name" value="recR"/>
    <property type="match status" value="1"/>
</dbReference>
<dbReference type="PANTHER" id="PTHR30446">
    <property type="entry name" value="RECOMBINATION PROTEIN RECR"/>
    <property type="match status" value="1"/>
</dbReference>
<dbReference type="PANTHER" id="PTHR30446:SF0">
    <property type="entry name" value="RECOMBINATION PROTEIN RECR"/>
    <property type="match status" value="1"/>
</dbReference>
<dbReference type="Pfam" id="PF21175">
    <property type="entry name" value="RecR_C"/>
    <property type="match status" value="1"/>
</dbReference>
<dbReference type="Pfam" id="PF21176">
    <property type="entry name" value="RecR_HhH"/>
    <property type="match status" value="1"/>
</dbReference>
<dbReference type="Pfam" id="PF02132">
    <property type="entry name" value="RecR_ZnF"/>
    <property type="match status" value="1"/>
</dbReference>
<dbReference type="Pfam" id="PF13662">
    <property type="entry name" value="Toprim_4"/>
    <property type="match status" value="1"/>
</dbReference>
<dbReference type="SMART" id="SM00493">
    <property type="entry name" value="TOPRIM"/>
    <property type="match status" value="1"/>
</dbReference>
<dbReference type="SUPFAM" id="SSF111304">
    <property type="entry name" value="Recombination protein RecR"/>
    <property type="match status" value="1"/>
</dbReference>
<dbReference type="PROSITE" id="PS50880">
    <property type="entry name" value="TOPRIM"/>
    <property type="match status" value="1"/>
</dbReference>
<name>RECR_IDILO</name>
<comment type="function">
    <text evidence="1">May play a role in DNA repair. It seems to be involved in an RecBC-independent recombinational process of DNA repair. It may act with RecF and RecO.</text>
</comment>
<comment type="similarity">
    <text evidence="1">Belongs to the RecR family.</text>
</comment>
<evidence type="ECO:0000255" key="1">
    <source>
        <dbReference type="HAMAP-Rule" id="MF_00017"/>
    </source>
</evidence>
<keyword id="KW-0227">DNA damage</keyword>
<keyword id="KW-0233">DNA recombination</keyword>
<keyword id="KW-0234">DNA repair</keyword>
<keyword id="KW-0479">Metal-binding</keyword>
<keyword id="KW-1185">Reference proteome</keyword>
<keyword id="KW-0862">Zinc</keyword>
<keyword id="KW-0863">Zinc-finger</keyword>
<proteinExistence type="inferred from homology"/>
<reference key="1">
    <citation type="journal article" date="2004" name="Proc. Natl. Acad. Sci. U.S.A.">
        <title>Genome sequence of the deep-sea gamma-proteobacterium Idiomarina loihiensis reveals amino acid fermentation as a source of carbon and energy.</title>
        <authorList>
            <person name="Hou S."/>
            <person name="Saw J.H."/>
            <person name="Lee K.S."/>
            <person name="Freitas T.A."/>
            <person name="Belisle C."/>
            <person name="Kawarabayasi Y."/>
            <person name="Donachie S.P."/>
            <person name="Pikina A."/>
            <person name="Galperin M.Y."/>
            <person name="Koonin E.V."/>
            <person name="Makarova K.S."/>
            <person name="Omelchenko M.V."/>
            <person name="Sorokin A."/>
            <person name="Wolf Y.I."/>
            <person name="Li Q.X."/>
            <person name="Keum Y.S."/>
            <person name="Campbell S."/>
            <person name="Denery J."/>
            <person name="Aizawa S."/>
            <person name="Shibata S."/>
            <person name="Malahoff A."/>
            <person name="Alam M."/>
        </authorList>
    </citation>
    <scope>NUCLEOTIDE SEQUENCE [LARGE SCALE GENOMIC DNA]</scope>
    <source>
        <strain>ATCC BAA-735 / DSM 15497 / L2-TR</strain>
    </source>
</reference>
<gene>
    <name evidence="1" type="primary">recR</name>
    <name type="ordered locus">IL1847</name>
</gene>
<accession>Q5QWR1</accession>